<organism>
    <name type="scientific">Chlamydia caviae (strain ATCC VR-813 / DSM 19441 / 03DC25 / GPIC)</name>
    <name type="common">Chlamydophila caviae</name>
    <dbReference type="NCBI Taxonomy" id="227941"/>
    <lineage>
        <taxon>Bacteria</taxon>
        <taxon>Pseudomonadati</taxon>
        <taxon>Chlamydiota</taxon>
        <taxon>Chlamydiia</taxon>
        <taxon>Chlamydiales</taxon>
        <taxon>Chlamydiaceae</taxon>
        <taxon>Chlamydia/Chlamydophila group</taxon>
        <taxon>Chlamydia</taxon>
    </lineage>
</organism>
<keyword id="KW-0413">Isomerase</keyword>
<keyword id="KW-0460">Magnesium</keyword>
<keyword id="KW-0479">Metal-binding</keyword>
<keyword id="KW-0597">Phosphoprotein</keyword>
<proteinExistence type="inferred from homology"/>
<evidence type="ECO:0000255" key="1">
    <source>
        <dbReference type="HAMAP-Rule" id="MF_01554"/>
    </source>
</evidence>
<comment type="function">
    <text evidence="1">Catalyzes the conversion of glucosamine-6-phosphate to glucosamine-1-phosphate.</text>
</comment>
<comment type="catalytic activity">
    <reaction evidence="1">
        <text>alpha-D-glucosamine 1-phosphate = D-glucosamine 6-phosphate</text>
        <dbReference type="Rhea" id="RHEA:23424"/>
        <dbReference type="ChEBI" id="CHEBI:58516"/>
        <dbReference type="ChEBI" id="CHEBI:58725"/>
        <dbReference type="EC" id="5.4.2.10"/>
    </reaction>
</comment>
<comment type="cofactor">
    <cofactor evidence="1">
        <name>Mg(2+)</name>
        <dbReference type="ChEBI" id="CHEBI:18420"/>
    </cofactor>
    <text evidence="1">Binds 1 Mg(2+) ion per subunit.</text>
</comment>
<comment type="PTM">
    <text evidence="1">Activated by phosphorylation.</text>
</comment>
<comment type="similarity">
    <text evidence="1">Belongs to the phosphohexose mutase family.</text>
</comment>
<feature type="chain" id="PRO_0000147871" description="Phosphoglucosamine mutase">
    <location>
        <begin position="1"/>
        <end position="458"/>
    </location>
</feature>
<feature type="active site" description="Phosphoserine intermediate" evidence="1">
    <location>
        <position position="106"/>
    </location>
</feature>
<feature type="binding site" description="via phosphate group" evidence="1">
    <location>
        <position position="106"/>
    </location>
    <ligand>
        <name>Mg(2+)</name>
        <dbReference type="ChEBI" id="CHEBI:18420"/>
    </ligand>
</feature>
<feature type="binding site" evidence="1">
    <location>
        <position position="247"/>
    </location>
    <ligand>
        <name>Mg(2+)</name>
        <dbReference type="ChEBI" id="CHEBI:18420"/>
    </ligand>
</feature>
<feature type="binding site" evidence="1">
    <location>
        <position position="249"/>
    </location>
    <ligand>
        <name>Mg(2+)</name>
        <dbReference type="ChEBI" id="CHEBI:18420"/>
    </ligand>
</feature>
<feature type="binding site" evidence="1">
    <location>
        <position position="251"/>
    </location>
    <ligand>
        <name>Mg(2+)</name>
        <dbReference type="ChEBI" id="CHEBI:18420"/>
    </ligand>
</feature>
<feature type="modified residue" description="Phosphoserine" evidence="1">
    <location>
        <position position="106"/>
    </location>
</feature>
<gene>
    <name evidence="1" type="primary">glmM</name>
    <name type="ordered locus">CCA_00789</name>
</gene>
<reference key="1">
    <citation type="journal article" date="2003" name="Nucleic Acids Res.">
        <title>Genome sequence of Chlamydophila caviae (Chlamydia psittaci GPIC): examining the role of niche-specific genes in the evolution of the Chlamydiaceae.</title>
        <authorList>
            <person name="Read T.D."/>
            <person name="Myers G.S.A."/>
            <person name="Brunham R.C."/>
            <person name="Nelson W.C."/>
            <person name="Paulsen I.T."/>
            <person name="Heidelberg J.F."/>
            <person name="Holtzapple E.K."/>
            <person name="Khouri H.M."/>
            <person name="Federova N.B."/>
            <person name="Carty H.A."/>
            <person name="Umayam L.A."/>
            <person name="Haft D.H."/>
            <person name="Peterson J.D."/>
            <person name="Beanan M.J."/>
            <person name="White O."/>
            <person name="Salzberg S.L."/>
            <person name="Hsia R.-C."/>
            <person name="McClarty G."/>
            <person name="Rank R.G."/>
            <person name="Bavoil P.M."/>
            <person name="Fraser C.M."/>
        </authorList>
    </citation>
    <scope>NUCLEOTIDE SEQUENCE [LARGE SCALE GENOMIC DNA]</scope>
    <source>
        <strain>ATCC VR-813 / DSM 19441 / 03DC25 / GPIC</strain>
    </source>
</reference>
<protein>
    <recommendedName>
        <fullName evidence="1">Phosphoglucosamine mutase</fullName>
        <ecNumber evidence="1">5.4.2.10</ecNumber>
    </recommendedName>
</protein>
<dbReference type="EC" id="5.4.2.10" evidence="1"/>
<dbReference type="EMBL" id="AE015925">
    <property type="protein sequence ID" value="AAP05530.1"/>
    <property type="molecule type" value="Genomic_DNA"/>
</dbReference>
<dbReference type="RefSeq" id="WP_011006744.1">
    <property type="nucleotide sequence ID" value="NC_003361.3"/>
</dbReference>
<dbReference type="SMR" id="Q821Z6"/>
<dbReference type="STRING" id="227941.CCA_00789"/>
<dbReference type="KEGG" id="cca:CCA_00789"/>
<dbReference type="eggNOG" id="COG1109">
    <property type="taxonomic scope" value="Bacteria"/>
</dbReference>
<dbReference type="HOGENOM" id="CLU_016950_7_0_0"/>
<dbReference type="OrthoDB" id="9806956at2"/>
<dbReference type="Proteomes" id="UP000002193">
    <property type="component" value="Chromosome"/>
</dbReference>
<dbReference type="GO" id="GO:0005829">
    <property type="term" value="C:cytosol"/>
    <property type="evidence" value="ECO:0007669"/>
    <property type="project" value="TreeGrafter"/>
</dbReference>
<dbReference type="GO" id="GO:0000287">
    <property type="term" value="F:magnesium ion binding"/>
    <property type="evidence" value="ECO:0007669"/>
    <property type="project" value="UniProtKB-UniRule"/>
</dbReference>
<dbReference type="GO" id="GO:0008966">
    <property type="term" value="F:phosphoglucosamine mutase activity"/>
    <property type="evidence" value="ECO:0007669"/>
    <property type="project" value="UniProtKB-UniRule"/>
</dbReference>
<dbReference type="GO" id="GO:0004615">
    <property type="term" value="F:phosphomannomutase activity"/>
    <property type="evidence" value="ECO:0007669"/>
    <property type="project" value="TreeGrafter"/>
</dbReference>
<dbReference type="GO" id="GO:0005975">
    <property type="term" value="P:carbohydrate metabolic process"/>
    <property type="evidence" value="ECO:0007669"/>
    <property type="project" value="InterPro"/>
</dbReference>
<dbReference type="GO" id="GO:0009252">
    <property type="term" value="P:peptidoglycan biosynthetic process"/>
    <property type="evidence" value="ECO:0007669"/>
    <property type="project" value="TreeGrafter"/>
</dbReference>
<dbReference type="GO" id="GO:0006048">
    <property type="term" value="P:UDP-N-acetylglucosamine biosynthetic process"/>
    <property type="evidence" value="ECO:0007669"/>
    <property type="project" value="TreeGrafter"/>
</dbReference>
<dbReference type="CDD" id="cd05802">
    <property type="entry name" value="GlmM"/>
    <property type="match status" value="1"/>
</dbReference>
<dbReference type="FunFam" id="3.30.310.50:FF:000001">
    <property type="entry name" value="Phosphoglucosamine mutase"/>
    <property type="match status" value="1"/>
</dbReference>
<dbReference type="FunFam" id="3.40.120.10:FF:000001">
    <property type="entry name" value="Phosphoglucosamine mutase"/>
    <property type="match status" value="1"/>
</dbReference>
<dbReference type="FunFam" id="3.40.120.10:FF:000003">
    <property type="entry name" value="Phosphoglucosamine mutase"/>
    <property type="match status" value="1"/>
</dbReference>
<dbReference type="Gene3D" id="3.40.120.10">
    <property type="entry name" value="Alpha-D-Glucose-1,6-Bisphosphate, subunit A, domain 3"/>
    <property type="match status" value="3"/>
</dbReference>
<dbReference type="Gene3D" id="3.30.310.50">
    <property type="entry name" value="Alpha-D-phosphohexomutase, C-terminal domain"/>
    <property type="match status" value="1"/>
</dbReference>
<dbReference type="HAMAP" id="MF_01554_B">
    <property type="entry name" value="GlmM_B"/>
    <property type="match status" value="1"/>
</dbReference>
<dbReference type="InterPro" id="IPR005844">
    <property type="entry name" value="A-D-PHexomutase_a/b/a-I"/>
</dbReference>
<dbReference type="InterPro" id="IPR016055">
    <property type="entry name" value="A-D-PHexomutase_a/b/a-I/II/III"/>
</dbReference>
<dbReference type="InterPro" id="IPR005845">
    <property type="entry name" value="A-D-PHexomutase_a/b/a-II"/>
</dbReference>
<dbReference type="InterPro" id="IPR005846">
    <property type="entry name" value="A-D-PHexomutase_a/b/a-III"/>
</dbReference>
<dbReference type="InterPro" id="IPR005843">
    <property type="entry name" value="A-D-PHexomutase_C"/>
</dbReference>
<dbReference type="InterPro" id="IPR036900">
    <property type="entry name" value="A-D-PHexomutase_C_sf"/>
</dbReference>
<dbReference type="InterPro" id="IPR016066">
    <property type="entry name" value="A-D-PHexomutase_CS"/>
</dbReference>
<dbReference type="InterPro" id="IPR005841">
    <property type="entry name" value="Alpha-D-phosphohexomutase_SF"/>
</dbReference>
<dbReference type="InterPro" id="IPR006352">
    <property type="entry name" value="GlmM_bact"/>
</dbReference>
<dbReference type="InterPro" id="IPR050060">
    <property type="entry name" value="Phosphoglucosamine_mutase"/>
</dbReference>
<dbReference type="NCBIfam" id="TIGR01455">
    <property type="entry name" value="glmM"/>
    <property type="match status" value="1"/>
</dbReference>
<dbReference type="NCBIfam" id="NF008139">
    <property type="entry name" value="PRK10887.1"/>
    <property type="match status" value="1"/>
</dbReference>
<dbReference type="PANTHER" id="PTHR42946:SF1">
    <property type="entry name" value="PHOSPHOGLUCOMUTASE (ALPHA-D-GLUCOSE-1,6-BISPHOSPHATE-DEPENDENT)"/>
    <property type="match status" value="1"/>
</dbReference>
<dbReference type="PANTHER" id="PTHR42946">
    <property type="entry name" value="PHOSPHOHEXOSE MUTASE"/>
    <property type="match status" value="1"/>
</dbReference>
<dbReference type="Pfam" id="PF02878">
    <property type="entry name" value="PGM_PMM_I"/>
    <property type="match status" value="1"/>
</dbReference>
<dbReference type="Pfam" id="PF02879">
    <property type="entry name" value="PGM_PMM_II"/>
    <property type="match status" value="1"/>
</dbReference>
<dbReference type="Pfam" id="PF02880">
    <property type="entry name" value="PGM_PMM_III"/>
    <property type="match status" value="1"/>
</dbReference>
<dbReference type="Pfam" id="PF00408">
    <property type="entry name" value="PGM_PMM_IV"/>
    <property type="match status" value="1"/>
</dbReference>
<dbReference type="PRINTS" id="PR00509">
    <property type="entry name" value="PGMPMM"/>
</dbReference>
<dbReference type="SUPFAM" id="SSF55957">
    <property type="entry name" value="Phosphoglucomutase, C-terminal domain"/>
    <property type="match status" value="1"/>
</dbReference>
<dbReference type="SUPFAM" id="SSF53738">
    <property type="entry name" value="Phosphoglucomutase, first 3 domains"/>
    <property type="match status" value="3"/>
</dbReference>
<dbReference type="PROSITE" id="PS00710">
    <property type="entry name" value="PGM_PMM"/>
    <property type="match status" value="1"/>
</dbReference>
<accession>Q821Z6</accession>
<name>GLMM_CHLCV</name>
<sequence>MTREEKQLFGTDGIRGRANYEPMTVELSVLLGKAVAGVLQERKPGKHRVVVGKDTRLSGYMFENALVAGLTSMGIETLVLGPIPTPGVAFITRAYRADAGIMISASHNPYWDNGIKIFSSEGFKISDVIERRIEQMVACRDFGNFPEDYAVGKNKRVVDAMGRYIEFAKATFPKGRTLKGLKIVLDCAHGAAYKVAPSVFEELDAEVICYGCEPTGSNINDNCGALFPSVIQKAVIEHKADVGIALDGDGDRIIMVNEKGHIVDGDMILSICASDLKKKALLNGNRVVATVMTNFGVLKYLESLGIETLISSVGDRHVLQNMLEHEANLGGEQSGHMIFLDYNTTGDGIVSALQVLRIMIESESTLSDLTSLIVKSPQALINVSVKEKIPLDTLPIVQEALRDVRSSLGDSGRVLLRYSGTENICRVMVEGLKKHQVDSLAKTIADIVDSELGAGIIE</sequence>